<comment type="similarity">
    <text evidence="1">Belongs to the UPF0398 family.</text>
</comment>
<gene>
    <name type="ordered locus">SPD_0338</name>
</gene>
<organism>
    <name type="scientific">Streptococcus pneumoniae serotype 2 (strain D39 / NCTC 7466)</name>
    <dbReference type="NCBI Taxonomy" id="373153"/>
    <lineage>
        <taxon>Bacteria</taxon>
        <taxon>Bacillati</taxon>
        <taxon>Bacillota</taxon>
        <taxon>Bacilli</taxon>
        <taxon>Lactobacillales</taxon>
        <taxon>Streptococcaceae</taxon>
        <taxon>Streptococcus</taxon>
    </lineage>
</organism>
<reference key="1">
    <citation type="journal article" date="2007" name="J. Bacteriol.">
        <title>Genome sequence of Avery's virulent serotype 2 strain D39 of Streptococcus pneumoniae and comparison with that of unencapsulated laboratory strain R6.</title>
        <authorList>
            <person name="Lanie J.A."/>
            <person name="Ng W.-L."/>
            <person name="Kazmierczak K.M."/>
            <person name="Andrzejewski T.M."/>
            <person name="Davidsen T.M."/>
            <person name="Wayne K.J."/>
            <person name="Tettelin H."/>
            <person name="Glass J.I."/>
            <person name="Winkler M.E."/>
        </authorList>
    </citation>
    <scope>NUCLEOTIDE SEQUENCE [LARGE SCALE GENOMIC DNA]</scope>
    <source>
        <strain>D39 / NCTC 7466</strain>
    </source>
</reference>
<name>Y338_STRP2</name>
<evidence type="ECO:0000255" key="1">
    <source>
        <dbReference type="HAMAP-Rule" id="MF_01575"/>
    </source>
</evidence>
<proteinExistence type="inferred from homology"/>
<protein>
    <recommendedName>
        <fullName evidence="1">UPF0398 protein SPD_0338</fullName>
    </recommendedName>
</protein>
<keyword id="KW-1185">Reference proteome</keyword>
<sequence>MATALVLGYSAFDLGLFSDKDPRLKLIKKAIRKDLEAMAADGVSWLVFTGSLGFEYWVLEVAQEMKTEYGFQLATIFAFETHGENWNEGNQMKLSRFKQVDFVKYAYPRYEHKGQLRDYQQFLLENTTSSYLFYDEENETKLAYFYQKMKNQEDYFIKRLTFDQLNELAENFSEN</sequence>
<feature type="chain" id="PRO_1000069220" description="UPF0398 protein SPD_0338">
    <location>
        <begin position="1"/>
        <end position="175"/>
    </location>
</feature>
<dbReference type="EMBL" id="CP000410">
    <property type="protein sequence ID" value="ABJ55194.1"/>
    <property type="molecule type" value="Genomic_DNA"/>
</dbReference>
<dbReference type="RefSeq" id="WP_000179549.1">
    <property type="nucleotide sequence ID" value="NZ_JAMLJR010000016.1"/>
</dbReference>
<dbReference type="SMR" id="Q04M96"/>
<dbReference type="PaxDb" id="373153-SPD_0338"/>
<dbReference type="KEGG" id="spd:SPD_0338"/>
<dbReference type="eggNOG" id="COG4474">
    <property type="taxonomic scope" value="Bacteria"/>
</dbReference>
<dbReference type="HOGENOM" id="CLU_105319_0_0_9"/>
<dbReference type="BioCyc" id="SPNE373153:G1G6V-372-MONOMER"/>
<dbReference type="Proteomes" id="UP000001452">
    <property type="component" value="Chromosome"/>
</dbReference>
<dbReference type="Gene3D" id="3.40.50.450">
    <property type="match status" value="1"/>
</dbReference>
<dbReference type="HAMAP" id="MF_01575">
    <property type="entry name" value="UPF0398"/>
    <property type="match status" value="1"/>
</dbReference>
<dbReference type="InterPro" id="IPR010697">
    <property type="entry name" value="YspA"/>
</dbReference>
<dbReference type="NCBIfam" id="NF010181">
    <property type="entry name" value="PRK13660.1"/>
    <property type="match status" value="1"/>
</dbReference>
<dbReference type="PANTHER" id="PTHR38440:SF1">
    <property type="entry name" value="UPF0398 PROTEIN SPR0331"/>
    <property type="match status" value="1"/>
</dbReference>
<dbReference type="PANTHER" id="PTHR38440">
    <property type="entry name" value="UPF0398 PROTEIN YPSA"/>
    <property type="match status" value="1"/>
</dbReference>
<dbReference type="Pfam" id="PF06908">
    <property type="entry name" value="YpsA"/>
    <property type="match status" value="1"/>
</dbReference>
<dbReference type="PIRSF" id="PIRSF021290">
    <property type="entry name" value="DUF1273"/>
    <property type="match status" value="1"/>
</dbReference>
<dbReference type="SUPFAM" id="SSF102405">
    <property type="entry name" value="MCP/YpsA-like"/>
    <property type="match status" value="1"/>
</dbReference>
<accession>Q04M96</accession>